<dbReference type="EMBL" id="AF047489">
    <property type="protein sequence ID" value="AAF06698.1"/>
    <property type="molecule type" value="mRNA"/>
</dbReference>
<dbReference type="EMBL" id="AK002024">
    <property type="protein sequence ID" value="BAA92042.1"/>
    <property type="molecule type" value="mRNA"/>
</dbReference>
<dbReference type="EMBL" id="AC018642">
    <property type="status" value="NOT_ANNOTATED_CDS"/>
    <property type="molecule type" value="Genomic_DNA"/>
</dbReference>
<dbReference type="EMBL" id="CH236950">
    <property type="protein sequence ID" value="EAL24081.1"/>
    <property type="molecule type" value="Genomic_DNA"/>
</dbReference>
<dbReference type="EMBL" id="CH471070">
    <property type="protein sequence ID" value="EAW83782.1"/>
    <property type="molecule type" value="Genomic_DNA"/>
</dbReference>
<dbReference type="EMBL" id="BC002834">
    <property type="protein sequence ID" value="AAH02834.2"/>
    <property type="molecule type" value="mRNA"/>
</dbReference>
<dbReference type="EMBL" id="BC067825">
    <property type="protein sequence ID" value="AAH67825.1"/>
    <property type="molecule type" value="mRNA"/>
</dbReference>
<dbReference type="EMBL" id="AL162071">
    <property type="protein sequence ID" value="CAB82407.1"/>
    <property type="molecule type" value="mRNA"/>
</dbReference>
<dbReference type="CCDS" id="CCDS34754.1">
    <molecule id="Q9UL63-1"/>
</dbReference>
<dbReference type="PIR" id="T47173">
    <property type="entry name" value="T47173"/>
</dbReference>
<dbReference type="RefSeq" id="NP_001138826.1">
    <property type="nucleotide sequence ID" value="NM_001145354.1"/>
</dbReference>
<dbReference type="RefSeq" id="NP_001308245.1">
    <molecule id="Q9UL63-2"/>
    <property type="nucleotide sequence ID" value="NM_001321316.2"/>
</dbReference>
<dbReference type="RefSeq" id="NP_037387.2">
    <molecule id="Q9UL63-1"/>
    <property type="nucleotide sequence ID" value="NM_013255.4"/>
</dbReference>
<dbReference type="PDB" id="8TTQ">
    <property type="method" value="EM"/>
    <property type="resolution" value="3.27 A"/>
    <property type="chains" value="A/B=2-735"/>
</dbReference>
<dbReference type="PDBsum" id="8TTQ"/>
<dbReference type="EMDB" id="EMD-41612"/>
<dbReference type="EMDB" id="EMD-45088"/>
<dbReference type="SMR" id="Q9UL63"/>
<dbReference type="BioGRID" id="110435">
    <property type="interactions" value="137"/>
</dbReference>
<dbReference type="ComplexPortal" id="CPX-7901">
    <property type="entry name" value="GID E3 ubiquitin ligase complex, RMND5B-RANBP9 variant"/>
</dbReference>
<dbReference type="ComplexPortal" id="CPX-7902">
    <property type="entry name" value="GID E3 ubiquitin ligase complex, RMND5A-RANBP10 variant"/>
</dbReference>
<dbReference type="ComplexPortal" id="CPX-7903">
    <property type="entry name" value="GID E3 ubiquitin ligase complex, RMND5B-RANBP10 variant"/>
</dbReference>
<dbReference type="ComplexPortal" id="CPX-876">
    <property type="entry name" value="GID E3 ubiquitin ligase complex, RMND5A-RANBP9 variant"/>
</dbReference>
<dbReference type="CORUM" id="Q9UL63"/>
<dbReference type="FunCoup" id="Q9UL63">
    <property type="interactions" value="2363"/>
</dbReference>
<dbReference type="IntAct" id="Q9UL63">
    <property type="interactions" value="93"/>
</dbReference>
<dbReference type="MINT" id="Q9UL63"/>
<dbReference type="STRING" id="9606.ENSP00000323527"/>
<dbReference type="GlyGen" id="Q9UL63">
    <property type="glycosylation" value="1 site, 1 O-linked glycan (1 site)"/>
</dbReference>
<dbReference type="iPTMnet" id="Q9UL63"/>
<dbReference type="PhosphoSitePlus" id="Q9UL63"/>
<dbReference type="BioMuta" id="MKLN1"/>
<dbReference type="DMDM" id="23821862"/>
<dbReference type="jPOST" id="Q9UL63"/>
<dbReference type="MassIVE" id="Q9UL63"/>
<dbReference type="PaxDb" id="9606-ENSP00000323527"/>
<dbReference type="PeptideAtlas" id="Q9UL63"/>
<dbReference type="ProteomicsDB" id="84959">
    <molecule id="Q9UL63-1"/>
</dbReference>
<dbReference type="ProteomicsDB" id="84960">
    <molecule id="Q9UL63-2"/>
</dbReference>
<dbReference type="Pumba" id="Q9UL63"/>
<dbReference type="Antibodypedia" id="18008">
    <property type="antibodies" value="144 antibodies from 22 providers"/>
</dbReference>
<dbReference type="DNASU" id="4289"/>
<dbReference type="Ensembl" id="ENST00000352689.11">
    <molecule id="Q9UL63-1"/>
    <property type="protein sequence ID" value="ENSP00000323527.6"/>
    <property type="gene ID" value="ENSG00000128585.18"/>
</dbReference>
<dbReference type="GeneID" id="4289"/>
<dbReference type="KEGG" id="hsa:4289"/>
<dbReference type="MANE-Select" id="ENST00000352689.11">
    <property type="protein sequence ID" value="ENSP00000323527.6"/>
    <property type="RefSeq nucleotide sequence ID" value="NM_013255.5"/>
    <property type="RefSeq protein sequence ID" value="NP_037387.2"/>
</dbReference>
<dbReference type="UCSC" id="uc011kpm.3">
    <molecule id="Q9UL63-1"/>
    <property type="organism name" value="human"/>
</dbReference>
<dbReference type="AGR" id="HGNC:7109"/>
<dbReference type="CTD" id="4289"/>
<dbReference type="DisGeNET" id="4289"/>
<dbReference type="GeneCards" id="MKLN1"/>
<dbReference type="HGNC" id="HGNC:7109">
    <property type="gene designation" value="MKLN1"/>
</dbReference>
<dbReference type="HPA" id="ENSG00000128585">
    <property type="expression patterns" value="Low tissue specificity"/>
</dbReference>
<dbReference type="MIM" id="605623">
    <property type="type" value="gene"/>
</dbReference>
<dbReference type="neXtProt" id="NX_Q9UL63"/>
<dbReference type="OpenTargets" id="ENSG00000128585"/>
<dbReference type="PharmGKB" id="PA30828"/>
<dbReference type="VEuPathDB" id="HostDB:ENSG00000128585"/>
<dbReference type="eggNOG" id="KOG2437">
    <property type="taxonomic scope" value="Eukaryota"/>
</dbReference>
<dbReference type="GeneTree" id="ENSGT00390000001702"/>
<dbReference type="HOGENOM" id="CLU_004210_1_0_1"/>
<dbReference type="InParanoid" id="Q9UL63"/>
<dbReference type="OMA" id="NKQDYKH"/>
<dbReference type="OrthoDB" id="10052615at2759"/>
<dbReference type="PAN-GO" id="Q9UL63">
    <property type="GO annotations" value="1 GO annotation based on evolutionary models"/>
</dbReference>
<dbReference type="PhylomeDB" id="Q9UL63"/>
<dbReference type="TreeFam" id="TF323659"/>
<dbReference type="PathwayCommons" id="Q9UL63"/>
<dbReference type="Reactome" id="R-HSA-9861718">
    <property type="pathway name" value="Regulation of pyruvate metabolism"/>
</dbReference>
<dbReference type="SignaLink" id="Q9UL63"/>
<dbReference type="BioGRID-ORCS" id="4289">
    <property type="hits" value="38 hits in 1155 CRISPR screens"/>
</dbReference>
<dbReference type="ChiTaRS" id="MKLN1">
    <property type="organism name" value="human"/>
</dbReference>
<dbReference type="GeneWiki" id="MKLN1"/>
<dbReference type="GenomeRNAi" id="4289"/>
<dbReference type="Pharos" id="Q9UL63">
    <property type="development level" value="Tbio"/>
</dbReference>
<dbReference type="PRO" id="PR:Q9UL63"/>
<dbReference type="Proteomes" id="UP000005640">
    <property type="component" value="Chromosome 7"/>
</dbReference>
<dbReference type="RNAct" id="Q9UL63">
    <property type="molecule type" value="protein"/>
</dbReference>
<dbReference type="Bgee" id="ENSG00000128585">
    <property type="expression patterns" value="Expressed in calcaneal tendon and 189 other cell types or tissues"/>
</dbReference>
<dbReference type="ExpressionAtlas" id="Q9UL63">
    <property type="expression patterns" value="baseline and differential"/>
</dbReference>
<dbReference type="GO" id="GO:0005938">
    <property type="term" value="C:cell cortex"/>
    <property type="evidence" value="ECO:0000250"/>
    <property type="project" value="UniProtKB"/>
</dbReference>
<dbReference type="GO" id="GO:0005737">
    <property type="term" value="C:cytoplasm"/>
    <property type="evidence" value="ECO:0000314"/>
    <property type="project" value="UniProtKB"/>
</dbReference>
<dbReference type="GO" id="GO:0005829">
    <property type="term" value="C:cytosol"/>
    <property type="evidence" value="ECO:0000250"/>
    <property type="project" value="UniProtKB"/>
</dbReference>
<dbReference type="GO" id="GO:0098982">
    <property type="term" value="C:GABA-ergic synapse"/>
    <property type="evidence" value="ECO:0007669"/>
    <property type="project" value="Ensembl"/>
</dbReference>
<dbReference type="GO" id="GO:0005654">
    <property type="term" value="C:nucleoplasm"/>
    <property type="evidence" value="ECO:0007669"/>
    <property type="project" value="UniProtKB-SubCell"/>
</dbReference>
<dbReference type="GO" id="GO:0098895">
    <property type="term" value="C:postsynaptic endosome membrane"/>
    <property type="evidence" value="ECO:0007669"/>
    <property type="project" value="Ensembl"/>
</dbReference>
<dbReference type="GO" id="GO:0099164">
    <property type="term" value="C:postsynaptic specialization membrane of symmetric synapse"/>
    <property type="evidence" value="ECO:0007669"/>
    <property type="project" value="Ensembl"/>
</dbReference>
<dbReference type="GO" id="GO:0001726">
    <property type="term" value="C:ruffle"/>
    <property type="evidence" value="ECO:0000250"/>
    <property type="project" value="UniProtKB"/>
</dbReference>
<dbReference type="GO" id="GO:0000151">
    <property type="term" value="C:ubiquitin ligase complex"/>
    <property type="evidence" value="ECO:0000314"/>
    <property type="project" value="UniProtKB"/>
</dbReference>
<dbReference type="GO" id="GO:0042802">
    <property type="term" value="F:identical protein binding"/>
    <property type="evidence" value="ECO:0000353"/>
    <property type="project" value="IntAct"/>
</dbReference>
<dbReference type="GO" id="GO:0042803">
    <property type="term" value="F:protein homodimerization activity"/>
    <property type="evidence" value="ECO:0000250"/>
    <property type="project" value="UniProtKB"/>
</dbReference>
<dbReference type="GO" id="GO:0030036">
    <property type="term" value="P:actin cytoskeleton organization"/>
    <property type="evidence" value="ECO:0000250"/>
    <property type="project" value="UniProtKB"/>
</dbReference>
<dbReference type="GO" id="GO:0007160">
    <property type="term" value="P:cell-matrix adhesion"/>
    <property type="evidence" value="ECO:0000250"/>
    <property type="project" value="UniProtKB"/>
</dbReference>
<dbReference type="GO" id="GO:0098968">
    <property type="term" value="P:neurotransmitter receptor transport postsynaptic membrane to endosome"/>
    <property type="evidence" value="ECO:0007669"/>
    <property type="project" value="Ensembl"/>
</dbReference>
<dbReference type="GO" id="GO:0008360">
    <property type="term" value="P:regulation of cell shape"/>
    <property type="evidence" value="ECO:0000250"/>
    <property type="project" value="UniProtKB"/>
</dbReference>
<dbReference type="GO" id="GO:0002090">
    <property type="term" value="P:regulation of receptor internalization"/>
    <property type="evidence" value="ECO:0000250"/>
    <property type="project" value="UniProtKB"/>
</dbReference>
<dbReference type="GO" id="GO:0007165">
    <property type="term" value="P:signal transduction"/>
    <property type="evidence" value="ECO:0000303"/>
    <property type="project" value="ProtInc"/>
</dbReference>
<dbReference type="GO" id="GO:0099003">
    <property type="term" value="P:vesicle-mediated transport in synapse"/>
    <property type="evidence" value="ECO:0007669"/>
    <property type="project" value="Ensembl"/>
</dbReference>
<dbReference type="FunFam" id="2.120.10.80:FF:000018">
    <property type="entry name" value="Muskelin 1"/>
    <property type="match status" value="1"/>
</dbReference>
<dbReference type="FunFam" id="2.120.10.80:FF:000035">
    <property type="entry name" value="Muskelin 1"/>
    <property type="match status" value="1"/>
</dbReference>
<dbReference type="FunFam" id="2.60.120.260:FF:000066">
    <property type="entry name" value="Muskelin 1"/>
    <property type="match status" value="1"/>
</dbReference>
<dbReference type="Gene3D" id="2.60.120.260">
    <property type="entry name" value="Galactose-binding domain-like"/>
    <property type="match status" value="1"/>
</dbReference>
<dbReference type="Gene3D" id="2.120.10.80">
    <property type="entry name" value="Kelch-type beta propeller"/>
    <property type="match status" value="2"/>
</dbReference>
<dbReference type="InterPro" id="IPR056737">
    <property type="entry name" value="Beta-prop_ATRN-MKLN-like"/>
</dbReference>
<dbReference type="InterPro" id="IPR006595">
    <property type="entry name" value="CTLH_C"/>
</dbReference>
<dbReference type="InterPro" id="IPR052456">
    <property type="entry name" value="CTLH_complex_component"/>
</dbReference>
<dbReference type="InterPro" id="IPR011043">
    <property type="entry name" value="Gal_Oxase/kelch_b-propeller"/>
</dbReference>
<dbReference type="InterPro" id="IPR008979">
    <property type="entry name" value="Galactose-bd-like_sf"/>
</dbReference>
<dbReference type="InterPro" id="IPR015915">
    <property type="entry name" value="Kelch-typ_b-propeller"/>
</dbReference>
<dbReference type="InterPro" id="IPR006594">
    <property type="entry name" value="LisH"/>
</dbReference>
<dbReference type="InterPro" id="IPR010565">
    <property type="entry name" value="Muskelin_N"/>
</dbReference>
<dbReference type="PANTHER" id="PTHR15526">
    <property type="entry name" value="MUSKELIN"/>
    <property type="match status" value="1"/>
</dbReference>
<dbReference type="PANTHER" id="PTHR15526:SF5">
    <property type="entry name" value="MUSKELIN"/>
    <property type="match status" value="1"/>
</dbReference>
<dbReference type="Pfam" id="PF24981">
    <property type="entry name" value="Beta-prop_ATRN-LZTR1"/>
    <property type="match status" value="1"/>
</dbReference>
<dbReference type="Pfam" id="PF13415">
    <property type="entry name" value="Kelch_3"/>
    <property type="match status" value="1"/>
</dbReference>
<dbReference type="Pfam" id="PF06588">
    <property type="entry name" value="Muskelin_N"/>
    <property type="match status" value="1"/>
</dbReference>
<dbReference type="SMART" id="SM00667">
    <property type="entry name" value="LisH"/>
    <property type="match status" value="1"/>
</dbReference>
<dbReference type="SUPFAM" id="SSF50965">
    <property type="entry name" value="Galactose oxidase, central domain"/>
    <property type="match status" value="1"/>
</dbReference>
<dbReference type="SUPFAM" id="SSF49785">
    <property type="entry name" value="Galactose-binding domain-like"/>
    <property type="match status" value="1"/>
</dbReference>
<dbReference type="SUPFAM" id="SSF117281">
    <property type="entry name" value="Kelch motif"/>
    <property type="match status" value="1"/>
</dbReference>
<dbReference type="PROSITE" id="PS50897">
    <property type="entry name" value="CTLH"/>
    <property type="match status" value="1"/>
</dbReference>
<dbReference type="PROSITE" id="PS50896">
    <property type="entry name" value="LISH"/>
    <property type="match status" value="1"/>
</dbReference>
<organism>
    <name type="scientific">Homo sapiens</name>
    <name type="common">Human</name>
    <dbReference type="NCBI Taxonomy" id="9606"/>
    <lineage>
        <taxon>Eukaryota</taxon>
        <taxon>Metazoa</taxon>
        <taxon>Chordata</taxon>
        <taxon>Craniata</taxon>
        <taxon>Vertebrata</taxon>
        <taxon>Euteleostomi</taxon>
        <taxon>Mammalia</taxon>
        <taxon>Eutheria</taxon>
        <taxon>Euarchontoglires</taxon>
        <taxon>Primates</taxon>
        <taxon>Haplorrhini</taxon>
        <taxon>Catarrhini</taxon>
        <taxon>Hominidae</taxon>
        <taxon>Homo</taxon>
    </lineage>
</organism>
<proteinExistence type="evidence at protein level"/>
<comment type="function">
    <text evidence="1 7 8">Component of the CTLH E3 ubiquitin-protein ligase complex that selectively accepts ubiquitin from UBE2H and mediates ubiquitination and subsequent proteasomal degradation of the transcription factor HBP1 (PubMed:29911972). Required for internalization of the GABA receptor GABRA1 from the cell membrane via endosomes and subsequent GABRA1 degradation (By similarity). Acts as a mediator of cell spreading and cytoskeletal responses to the extracellular matrix component THBS1 (PubMed:18710924).</text>
</comment>
<comment type="subunit">
    <text evidence="2 5 6 7 8">Homodimer; may form higher oligomers (By similarity). Identified in the CTLH complex that contains GID4, RANBP9 and/or RANBP10, MKLN1, MAEA, RMND5A (or alternatively its paralog RMND5B), GID8, ARMC8, WDR26 and YPEL5 (PubMed:17467196, PubMed:29911972). Within this complex, MAEA, RMND5A (or alternatively its paralog RMND5B), GID8, WDR26, and RANBP9 and/or RANBP10 form the catalytic core, while GID4, MKLN1, ARMC8 and YPEL5 have ancillary roles (PubMed:29911972). Interacts with RANBP9 (PubMed:18710924). Part of a complex consisting of RANBP9, MKLN1 and GID8 (PubMed:12559565). Interacts with GABRA1. Interacts with the C-terminal tail of PTGER3 (By similarity).</text>
</comment>
<comment type="interaction">
    <interactant intactId="EBI-1048053">
        <id>Q9UL63</id>
    </interactant>
    <interactant intactId="EBI-8787584">
        <id>Q9BWK5</id>
        <label>CYREN</label>
    </interactant>
    <organismsDiffer>false</organismsDiffer>
    <experiments>3</experiments>
</comment>
<comment type="interaction">
    <interactant intactId="EBI-1048053">
        <id>Q9UL63</id>
    </interactant>
    <interactant intactId="EBI-720597">
        <id>Q9NWY4</id>
        <label>HPF1</label>
    </interactant>
    <organismsDiffer>false</organismsDiffer>
    <experiments>2</experiments>
</comment>
<comment type="interaction">
    <interactant intactId="EBI-1048053">
        <id>Q9UL63</id>
    </interactant>
    <interactant intactId="EBI-1048053">
        <id>Q9UL63</id>
        <label>MKLN1</label>
    </interactant>
    <organismsDiffer>false</organismsDiffer>
    <experiments>3</experiments>
</comment>
<comment type="interaction">
    <interactant intactId="EBI-1048053">
        <id>Q9UL63</id>
    </interactant>
    <interactant intactId="EBI-2515601">
        <id>Q8N680</id>
        <label>ZBTB2</label>
    </interactant>
    <organismsDiffer>false</organismsDiffer>
    <experiments>3</experiments>
</comment>
<comment type="subcellular location">
    <subcellularLocation>
        <location evidence="6">Cytoplasm</location>
    </subcellularLocation>
    <subcellularLocation>
        <location evidence="1">Cytoplasm</location>
        <location evidence="1">Cytosol</location>
    </subcellularLocation>
    <subcellularLocation>
        <location evidence="1">Nucleus</location>
        <location evidence="1">Nucleoplasm</location>
    </subcellularLocation>
    <subcellularLocation>
        <location evidence="1">Cell projection</location>
        <location evidence="1">Ruffle</location>
    </subcellularLocation>
    <subcellularLocation>
        <location evidence="1">Cytoplasm</location>
        <location evidence="1">Cell cortex</location>
    </subcellularLocation>
    <subcellularLocation>
        <location evidence="1">Synapse</location>
    </subcellularLocation>
    <subcellularLocation>
        <location evidence="1">Postsynapse</location>
    </subcellularLocation>
    <text evidence="1">Colocalizes with GABRA1 at synapses and in postsynaptic regions. Colocalizes with actin fibers in the cell cortex.</text>
</comment>
<comment type="alternative products">
    <event type="alternative splicing"/>
    <isoform>
        <id>Q9UL63-1</id>
        <name>1</name>
        <sequence type="displayed"/>
    </isoform>
    <isoform>
        <id>Q9UL63-2</id>
        <name>2</name>
        <sequence type="described" ref="VSP_021852"/>
    </isoform>
</comment>
<comment type="domain">
    <text evidence="2">The LisH mediates head to tail dimerization.</text>
</comment>
<reference key="1">
    <citation type="journal article" date="1999" name="Cytogenet. Cell Genet.">
        <title>cDNA cloning of human muskelin and localisation of the muskelin (MKLN1) gene to human chromosome 7q32 and mouse chromosome 6 B1/B2 by physical mapping and FISH.</title>
        <authorList>
            <person name="Adams J.C."/>
            <person name="Zhang L."/>
        </authorList>
    </citation>
    <scope>NUCLEOTIDE SEQUENCE [MRNA] (ISOFORM 1)</scope>
    <source>
        <tissue>Brain</tissue>
        <tissue>Kidney</tissue>
        <tissue>Lung</tissue>
        <tissue>Osteosarcoma</tissue>
    </source>
</reference>
<reference key="2">
    <citation type="journal article" date="2004" name="Nat. Genet.">
        <title>Complete sequencing and characterization of 21,243 full-length human cDNAs.</title>
        <authorList>
            <person name="Ota T."/>
            <person name="Suzuki Y."/>
            <person name="Nishikawa T."/>
            <person name="Otsuki T."/>
            <person name="Sugiyama T."/>
            <person name="Irie R."/>
            <person name="Wakamatsu A."/>
            <person name="Hayashi K."/>
            <person name="Sato H."/>
            <person name="Nagai K."/>
            <person name="Kimura K."/>
            <person name="Makita H."/>
            <person name="Sekine M."/>
            <person name="Obayashi M."/>
            <person name="Nishi T."/>
            <person name="Shibahara T."/>
            <person name="Tanaka T."/>
            <person name="Ishii S."/>
            <person name="Yamamoto J."/>
            <person name="Saito K."/>
            <person name="Kawai Y."/>
            <person name="Isono Y."/>
            <person name="Nakamura Y."/>
            <person name="Nagahari K."/>
            <person name="Murakami K."/>
            <person name="Yasuda T."/>
            <person name="Iwayanagi T."/>
            <person name="Wagatsuma M."/>
            <person name="Shiratori A."/>
            <person name="Sudo H."/>
            <person name="Hosoiri T."/>
            <person name="Kaku Y."/>
            <person name="Kodaira H."/>
            <person name="Kondo H."/>
            <person name="Sugawara M."/>
            <person name="Takahashi M."/>
            <person name="Kanda K."/>
            <person name="Yokoi T."/>
            <person name="Furuya T."/>
            <person name="Kikkawa E."/>
            <person name="Omura Y."/>
            <person name="Abe K."/>
            <person name="Kamihara K."/>
            <person name="Katsuta N."/>
            <person name="Sato K."/>
            <person name="Tanikawa M."/>
            <person name="Yamazaki M."/>
            <person name="Ninomiya K."/>
            <person name="Ishibashi T."/>
            <person name="Yamashita H."/>
            <person name="Murakawa K."/>
            <person name="Fujimori K."/>
            <person name="Tanai H."/>
            <person name="Kimata M."/>
            <person name="Watanabe M."/>
            <person name="Hiraoka S."/>
            <person name="Chiba Y."/>
            <person name="Ishida S."/>
            <person name="Ono Y."/>
            <person name="Takiguchi S."/>
            <person name="Watanabe S."/>
            <person name="Yosida M."/>
            <person name="Hotuta T."/>
            <person name="Kusano J."/>
            <person name="Kanehori K."/>
            <person name="Takahashi-Fujii A."/>
            <person name="Hara H."/>
            <person name="Tanase T.-O."/>
            <person name="Nomura Y."/>
            <person name="Togiya S."/>
            <person name="Komai F."/>
            <person name="Hara R."/>
            <person name="Takeuchi K."/>
            <person name="Arita M."/>
            <person name="Imose N."/>
            <person name="Musashino K."/>
            <person name="Yuuki H."/>
            <person name="Oshima A."/>
            <person name="Sasaki N."/>
            <person name="Aotsuka S."/>
            <person name="Yoshikawa Y."/>
            <person name="Matsunawa H."/>
            <person name="Ichihara T."/>
            <person name="Shiohata N."/>
            <person name="Sano S."/>
            <person name="Moriya S."/>
            <person name="Momiyama H."/>
            <person name="Satoh N."/>
            <person name="Takami S."/>
            <person name="Terashima Y."/>
            <person name="Suzuki O."/>
            <person name="Nakagawa S."/>
            <person name="Senoh A."/>
            <person name="Mizoguchi H."/>
            <person name="Goto Y."/>
            <person name="Shimizu F."/>
            <person name="Wakebe H."/>
            <person name="Hishigaki H."/>
            <person name="Watanabe T."/>
            <person name="Sugiyama A."/>
            <person name="Takemoto M."/>
            <person name="Kawakami B."/>
            <person name="Yamazaki M."/>
            <person name="Watanabe K."/>
            <person name="Kumagai A."/>
            <person name="Itakura S."/>
            <person name="Fukuzumi Y."/>
            <person name="Fujimori Y."/>
            <person name="Komiyama M."/>
            <person name="Tashiro H."/>
            <person name="Tanigami A."/>
            <person name="Fujiwara T."/>
            <person name="Ono T."/>
            <person name="Yamada K."/>
            <person name="Fujii Y."/>
            <person name="Ozaki K."/>
            <person name="Hirao M."/>
            <person name="Ohmori Y."/>
            <person name="Kawabata A."/>
            <person name="Hikiji T."/>
            <person name="Kobatake N."/>
            <person name="Inagaki H."/>
            <person name="Ikema Y."/>
            <person name="Okamoto S."/>
            <person name="Okitani R."/>
            <person name="Kawakami T."/>
            <person name="Noguchi S."/>
            <person name="Itoh T."/>
            <person name="Shigeta K."/>
            <person name="Senba T."/>
            <person name="Matsumura K."/>
            <person name="Nakajima Y."/>
            <person name="Mizuno T."/>
            <person name="Morinaga M."/>
            <person name="Sasaki M."/>
            <person name="Togashi T."/>
            <person name="Oyama M."/>
            <person name="Hata H."/>
            <person name="Watanabe M."/>
            <person name="Komatsu T."/>
            <person name="Mizushima-Sugano J."/>
            <person name="Satoh T."/>
            <person name="Shirai Y."/>
            <person name="Takahashi Y."/>
            <person name="Nakagawa K."/>
            <person name="Okumura K."/>
            <person name="Nagase T."/>
            <person name="Nomura N."/>
            <person name="Kikuchi H."/>
            <person name="Masuho Y."/>
            <person name="Yamashita R."/>
            <person name="Nakai K."/>
            <person name="Yada T."/>
            <person name="Nakamura Y."/>
            <person name="Ohara O."/>
            <person name="Isogai T."/>
            <person name="Sugano S."/>
        </authorList>
    </citation>
    <scope>NUCLEOTIDE SEQUENCE [LARGE SCALE MRNA] (ISOFORM 2)</scope>
    <source>
        <tissue>Placenta</tissue>
    </source>
</reference>
<reference key="3">
    <citation type="journal article" date="2003" name="Nature">
        <title>The DNA sequence of human chromosome 7.</title>
        <authorList>
            <person name="Hillier L.W."/>
            <person name="Fulton R.S."/>
            <person name="Fulton L.A."/>
            <person name="Graves T.A."/>
            <person name="Pepin K.H."/>
            <person name="Wagner-McPherson C."/>
            <person name="Layman D."/>
            <person name="Maas J."/>
            <person name="Jaeger S."/>
            <person name="Walker R."/>
            <person name="Wylie K."/>
            <person name="Sekhon M."/>
            <person name="Becker M.C."/>
            <person name="O'Laughlin M.D."/>
            <person name="Schaller M.E."/>
            <person name="Fewell G.A."/>
            <person name="Delehaunty K.D."/>
            <person name="Miner T.L."/>
            <person name="Nash W.E."/>
            <person name="Cordes M."/>
            <person name="Du H."/>
            <person name="Sun H."/>
            <person name="Edwards J."/>
            <person name="Bradshaw-Cordum H."/>
            <person name="Ali J."/>
            <person name="Andrews S."/>
            <person name="Isak A."/>
            <person name="Vanbrunt A."/>
            <person name="Nguyen C."/>
            <person name="Du F."/>
            <person name="Lamar B."/>
            <person name="Courtney L."/>
            <person name="Kalicki J."/>
            <person name="Ozersky P."/>
            <person name="Bielicki L."/>
            <person name="Scott K."/>
            <person name="Holmes A."/>
            <person name="Harkins R."/>
            <person name="Harris A."/>
            <person name="Strong C.M."/>
            <person name="Hou S."/>
            <person name="Tomlinson C."/>
            <person name="Dauphin-Kohlberg S."/>
            <person name="Kozlowicz-Reilly A."/>
            <person name="Leonard S."/>
            <person name="Rohlfing T."/>
            <person name="Rock S.M."/>
            <person name="Tin-Wollam A.-M."/>
            <person name="Abbott A."/>
            <person name="Minx P."/>
            <person name="Maupin R."/>
            <person name="Strowmatt C."/>
            <person name="Latreille P."/>
            <person name="Miller N."/>
            <person name="Johnson D."/>
            <person name="Murray J."/>
            <person name="Woessner J.P."/>
            <person name="Wendl M.C."/>
            <person name="Yang S.-P."/>
            <person name="Schultz B.R."/>
            <person name="Wallis J.W."/>
            <person name="Spieth J."/>
            <person name="Bieri T.A."/>
            <person name="Nelson J.O."/>
            <person name="Berkowicz N."/>
            <person name="Wohldmann P.E."/>
            <person name="Cook L.L."/>
            <person name="Hickenbotham M.T."/>
            <person name="Eldred J."/>
            <person name="Williams D."/>
            <person name="Bedell J.A."/>
            <person name="Mardis E.R."/>
            <person name="Clifton S.W."/>
            <person name="Chissoe S.L."/>
            <person name="Marra M.A."/>
            <person name="Raymond C."/>
            <person name="Haugen E."/>
            <person name="Gillett W."/>
            <person name="Zhou Y."/>
            <person name="James R."/>
            <person name="Phelps K."/>
            <person name="Iadanoto S."/>
            <person name="Bubb K."/>
            <person name="Simms E."/>
            <person name="Levy R."/>
            <person name="Clendenning J."/>
            <person name="Kaul R."/>
            <person name="Kent W.J."/>
            <person name="Furey T.S."/>
            <person name="Baertsch R.A."/>
            <person name="Brent M.R."/>
            <person name="Keibler E."/>
            <person name="Flicek P."/>
            <person name="Bork P."/>
            <person name="Suyama M."/>
            <person name="Bailey J.A."/>
            <person name="Portnoy M.E."/>
            <person name="Torrents D."/>
            <person name="Chinwalla A.T."/>
            <person name="Gish W.R."/>
            <person name="Eddy S.R."/>
            <person name="McPherson J.D."/>
            <person name="Olson M.V."/>
            <person name="Eichler E.E."/>
            <person name="Green E.D."/>
            <person name="Waterston R.H."/>
            <person name="Wilson R.K."/>
        </authorList>
    </citation>
    <scope>NUCLEOTIDE SEQUENCE [LARGE SCALE GENOMIC DNA]</scope>
</reference>
<reference key="4">
    <citation type="journal article" date="2003" name="Science">
        <title>Human chromosome 7: DNA sequence and biology.</title>
        <authorList>
            <person name="Scherer S.W."/>
            <person name="Cheung J."/>
            <person name="MacDonald J.R."/>
            <person name="Osborne L.R."/>
            <person name="Nakabayashi K."/>
            <person name="Herbrick J.-A."/>
            <person name="Carson A.R."/>
            <person name="Parker-Katiraee L."/>
            <person name="Skaug J."/>
            <person name="Khaja R."/>
            <person name="Zhang J."/>
            <person name="Hudek A.K."/>
            <person name="Li M."/>
            <person name="Haddad M."/>
            <person name="Duggan G.E."/>
            <person name="Fernandez B.A."/>
            <person name="Kanematsu E."/>
            <person name="Gentles S."/>
            <person name="Christopoulos C.C."/>
            <person name="Choufani S."/>
            <person name="Kwasnicka D."/>
            <person name="Zheng X.H."/>
            <person name="Lai Z."/>
            <person name="Nusskern D.R."/>
            <person name="Zhang Q."/>
            <person name="Gu Z."/>
            <person name="Lu F."/>
            <person name="Zeesman S."/>
            <person name="Nowaczyk M.J."/>
            <person name="Teshima I."/>
            <person name="Chitayat D."/>
            <person name="Shuman C."/>
            <person name="Weksberg R."/>
            <person name="Zackai E.H."/>
            <person name="Grebe T.A."/>
            <person name="Cox S.R."/>
            <person name="Kirkpatrick S.J."/>
            <person name="Rahman N."/>
            <person name="Friedman J.M."/>
            <person name="Heng H.H.Q."/>
            <person name="Pelicci P.G."/>
            <person name="Lo-Coco F."/>
            <person name="Belloni E."/>
            <person name="Shaffer L.G."/>
            <person name="Pober B."/>
            <person name="Morton C.C."/>
            <person name="Gusella J.F."/>
            <person name="Bruns G.A.P."/>
            <person name="Korf B.R."/>
            <person name="Quade B.J."/>
            <person name="Ligon A.H."/>
            <person name="Ferguson H."/>
            <person name="Higgins A.W."/>
            <person name="Leach N.T."/>
            <person name="Herrick S.R."/>
            <person name="Lemyre E."/>
            <person name="Farra C.G."/>
            <person name="Kim H.-G."/>
            <person name="Summers A.M."/>
            <person name="Gripp K.W."/>
            <person name="Roberts W."/>
            <person name="Szatmari P."/>
            <person name="Winsor E.J.T."/>
            <person name="Grzeschik K.-H."/>
            <person name="Teebi A."/>
            <person name="Minassian B.A."/>
            <person name="Kere J."/>
            <person name="Armengol L."/>
            <person name="Pujana M.A."/>
            <person name="Estivill X."/>
            <person name="Wilson M.D."/>
            <person name="Koop B.F."/>
            <person name="Tosi S."/>
            <person name="Moore G.E."/>
            <person name="Boright A.P."/>
            <person name="Zlotorynski E."/>
            <person name="Kerem B."/>
            <person name="Kroisel P.M."/>
            <person name="Petek E."/>
            <person name="Oscier D.G."/>
            <person name="Mould S.J."/>
            <person name="Doehner H."/>
            <person name="Doehner K."/>
            <person name="Rommens J.M."/>
            <person name="Vincent J.B."/>
            <person name="Venter J.C."/>
            <person name="Li P.W."/>
            <person name="Mural R.J."/>
            <person name="Adams M.D."/>
            <person name="Tsui L.-C."/>
        </authorList>
    </citation>
    <scope>NUCLEOTIDE SEQUENCE [LARGE SCALE GENOMIC DNA]</scope>
</reference>
<reference key="5">
    <citation type="submission" date="2005-07" db="EMBL/GenBank/DDBJ databases">
        <authorList>
            <person name="Mural R.J."/>
            <person name="Istrail S."/>
            <person name="Sutton G.G."/>
            <person name="Florea L."/>
            <person name="Halpern A.L."/>
            <person name="Mobarry C.M."/>
            <person name="Lippert R."/>
            <person name="Walenz B."/>
            <person name="Shatkay H."/>
            <person name="Dew I."/>
            <person name="Miller J.R."/>
            <person name="Flanigan M.J."/>
            <person name="Edwards N.J."/>
            <person name="Bolanos R."/>
            <person name="Fasulo D."/>
            <person name="Halldorsson B.V."/>
            <person name="Hannenhalli S."/>
            <person name="Turner R."/>
            <person name="Yooseph S."/>
            <person name="Lu F."/>
            <person name="Nusskern D.R."/>
            <person name="Shue B.C."/>
            <person name="Zheng X.H."/>
            <person name="Zhong F."/>
            <person name="Delcher A.L."/>
            <person name="Huson D.H."/>
            <person name="Kravitz S.A."/>
            <person name="Mouchard L."/>
            <person name="Reinert K."/>
            <person name="Remington K.A."/>
            <person name="Clark A.G."/>
            <person name="Waterman M.S."/>
            <person name="Eichler E.E."/>
            <person name="Adams M.D."/>
            <person name="Hunkapiller M.W."/>
            <person name="Myers E.W."/>
            <person name="Venter J.C."/>
        </authorList>
    </citation>
    <scope>NUCLEOTIDE SEQUENCE [LARGE SCALE GENOMIC DNA]</scope>
</reference>
<reference key="6">
    <citation type="journal article" date="2004" name="Genome Res.">
        <title>The status, quality, and expansion of the NIH full-length cDNA project: the Mammalian Gene Collection (MGC).</title>
        <authorList>
            <consortium name="The MGC Project Team"/>
        </authorList>
    </citation>
    <scope>NUCLEOTIDE SEQUENCE [LARGE SCALE MRNA] (ISOFORM 1)</scope>
    <source>
        <tissue>Testis</tissue>
        <tissue>Uterus</tissue>
    </source>
</reference>
<reference key="7">
    <citation type="journal article" date="2007" name="BMC Genomics">
        <title>The full-ORF clone resource of the German cDNA consortium.</title>
        <authorList>
            <person name="Bechtel S."/>
            <person name="Rosenfelder H."/>
            <person name="Duda A."/>
            <person name="Schmidt C.P."/>
            <person name="Ernst U."/>
            <person name="Wellenreuther R."/>
            <person name="Mehrle A."/>
            <person name="Schuster C."/>
            <person name="Bahr A."/>
            <person name="Bloecker H."/>
            <person name="Heubner D."/>
            <person name="Hoerlein A."/>
            <person name="Michel G."/>
            <person name="Wedler H."/>
            <person name="Koehrer K."/>
            <person name="Ottenwaelder B."/>
            <person name="Poustka A."/>
            <person name="Wiemann S."/>
            <person name="Schupp I."/>
        </authorList>
    </citation>
    <scope>NUCLEOTIDE SEQUENCE [LARGE SCALE MRNA] OF 320-735</scope>
    <source>
        <tissue>Melanoma</tissue>
    </source>
</reference>
<reference key="8">
    <citation type="journal article" date="2003" name="Gene">
        <title>A novel nuclear protein, Twa1, and Muskelin comprise a complex with RanBPM.</title>
        <authorList>
            <person name="Umeda M."/>
            <person name="Nishitani H."/>
            <person name="Nishimoto T."/>
        </authorList>
    </citation>
    <scope>INTERACTION WITH RANBP9</scope>
    <scope>IDENTIFICATION IN A COMPLEX WITH RANBP9 AND GID8</scope>
</reference>
<reference key="9">
    <citation type="journal article" date="2007" name="Gene">
        <title>RanBPM, Muskelin, p48EMLP, p44CTLH, and the armadillo-repeat proteins ARMC8alpha and ARMC8beta are components of the CTLH complex.</title>
        <authorList>
            <person name="Kobayashi N."/>
            <person name="Yang J."/>
            <person name="Ueda A."/>
            <person name="Suzuki T."/>
            <person name="Tomaru K."/>
            <person name="Takeno M."/>
            <person name="Okuda K."/>
            <person name="Ishigatsubo Y."/>
        </authorList>
    </citation>
    <scope>IDENTIFICATION IN THE CTLH COMPLEX</scope>
    <scope>IDENTIFICATION BY MASS SPECTROMETRY</scope>
    <scope>SUBCELLULAR LOCATION</scope>
</reference>
<reference key="10">
    <citation type="journal article" date="2008" name="J. Cell Biol.">
        <title>Novel role of the muskelin-RanBP9 complex as a nucleocytoplasmic mediator of cell morphology regulation.</title>
        <authorList>
            <person name="Valiyaveettil M."/>
            <person name="Bentley A.A."/>
            <person name="Gursahaney P."/>
            <person name="Hussien R."/>
            <person name="Chakravarti R."/>
            <person name="Kureishy N."/>
            <person name="Prag S."/>
            <person name="Adams J.C."/>
        </authorList>
    </citation>
    <scope>FUNCTION</scope>
    <scope>INTERACTION WITH RANBP9</scope>
</reference>
<reference key="11">
    <citation type="journal article" date="2009" name="Anal. Chem.">
        <title>Lys-N and trypsin cover complementary parts of the phosphoproteome in a refined SCX-based approach.</title>
        <authorList>
            <person name="Gauci S."/>
            <person name="Helbig A.O."/>
            <person name="Slijper M."/>
            <person name="Krijgsveld J."/>
            <person name="Heck A.J."/>
            <person name="Mohammed S."/>
        </authorList>
    </citation>
    <scope>ACETYLATION [LARGE SCALE ANALYSIS] AT ALA-2</scope>
    <scope>CLEAVAGE OF INITIATOR METHIONINE [LARGE SCALE ANALYSIS]</scope>
    <scope>IDENTIFICATION BY MASS SPECTROMETRY [LARGE SCALE ANALYSIS]</scope>
</reference>
<reference key="12">
    <citation type="journal article" date="2011" name="BMC Syst. Biol.">
        <title>Initial characterization of the human central proteome.</title>
        <authorList>
            <person name="Burkard T.R."/>
            <person name="Planyavsky M."/>
            <person name="Kaupe I."/>
            <person name="Breitwieser F.P."/>
            <person name="Buerckstuemmer T."/>
            <person name="Bennett K.L."/>
            <person name="Superti-Furga G."/>
            <person name="Colinge J."/>
        </authorList>
    </citation>
    <scope>IDENTIFICATION BY MASS SPECTROMETRY [LARGE SCALE ANALYSIS]</scope>
</reference>
<reference key="13">
    <citation type="journal article" date="2012" name="Mol. Cell. Proteomics">
        <title>Comparative large-scale characterisation of plant vs. mammal proteins reveals similar and idiosyncratic N-alpha acetylation features.</title>
        <authorList>
            <person name="Bienvenut W.V."/>
            <person name="Sumpton D."/>
            <person name="Martinez A."/>
            <person name="Lilla S."/>
            <person name="Espagne C."/>
            <person name="Meinnel T."/>
            <person name="Giglione C."/>
        </authorList>
    </citation>
    <scope>ACETYLATION [LARGE SCALE ANALYSIS] AT ALA-2</scope>
    <scope>CLEAVAGE OF INITIATOR METHIONINE [LARGE SCALE ANALYSIS]</scope>
    <scope>IDENTIFICATION BY MASS SPECTROMETRY [LARGE SCALE ANALYSIS]</scope>
</reference>
<reference key="14">
    <citation type="journal article" date="2018" name="Elife">
        <title>The multi-subunit GID/CTLH E3 ligase promotes proliferation and targets the transcription factor Hbp1 for degradation.</title>
        <authorList>
            <person name="Lampert F."/>
            <person name="Stafa D."/>
            <person name="Goga A."/>
            <person name="Soste M.V."/>
            <person name="Gilberto S."/>
            <person name="Olieric N."/>
            <person name="Picotti P."/>
            <person name="Stoffel M."/>
            <person name="Peter M."/>
        </authorList>
    </citation>
    <scope>FUNCTION</scope>
    <scope>IDENTIFICATION IN THE CTLH COMPLEX</scope>
    <scope>IDENTIFICATION BY MASS SPECTROMETRY</scope>
</reference>
<accession>Q9UL63</accession>
<accession>A4D1M8</accession>
<accession>A6NG43</accession>
<accession>Q9NSK4</accession>
<accession>Q9NUS8</accession>
<protein>
    <recommendedName>
        <fullName>Muskelin</fullName>
    </recommendedName>
</protein>
<evidence type="ECO:0000250" key="1">
    <source>
        <dbReference type="UniProtKB" id="O89050"/>
    </source>
</evidence>
<evidence type="ECO:0000250" key="2">
    <source>
        <dbReference type="UniProtKB" id="Q99PV3"/>
    </source>
</evidence>
<evidence type="ECO:0000255" key="3">
    <source>
        <dbReference type="PROSITE-ProRule" id="PRU00058"/>
    </source>
</evidence>
<evidence type="ECO:0000255" key="4">
    <source>
        <dbReference type="PROSITE-ProRule" id="PRU00126"/>
    </source>
</evidence>
<evidence type="ECO:0000269" key="5">
    <source>
    </source>
</evidence>
<evidence type="ECO:0000269" key="6">
    <source>
    </source>
</evidence>
<evidence type="ECO:0000269" key="7">
    <source>
    </source>
</evidence>
<evidence type="ECO:0000269" key="8">
    <source>
    </source>
</evidence>
<evidence type="ECO:0000303" key="9">
    <source>
    </source>
</evidence>
<evidence type="ECO:0000305" key="10"/>
<evidence type="ECO:0007744" key="11">
    <source>
    </source>
</evidence>
<evidence type="ECO:0007744" key="12">
    <source>
    </source>
</evidence>
<sequence>MAAGGAVAAAPECRLLPYALHKWSSFSSTYLPENILVDKPNDQSSRWSSESNYPPQYLILKLERPAIVQNITFGKYEKTHVCNLKKFKVFGGMNEENMTELLSSGLKNDYNKETFTLKHKIDEQMFPCRFIKIVPLLSWGPSFNFSIWYVELSGIDDPDIVQPCLNWYSKYREQEAIRLCLKHFRQHNYTEAFESLQKKTKIALEHPMLTDIHDKLVLKGDFDACEELIEKAVNDGLFNQYISQQEYKPRWSQIIPKSTKGDGEDNRPGMRGGHQMVIDVQTETVYLFGGWDGTQDLADFWAYSVKENQWTCISRDTEKENGPSARSCHKMCIDIQRRQIYTLGRYLDSSVRNSKSLKSDFYRYDIDTNTWMLLSEDTAADGGPKLVFDHQMCMDSEKHMIYTFGGRILTCNGSVDDSRASEPQFSGLFAFNCQCQTWKLLREDSCNAGPEDIQSRIGHCMLFHSKNRCLYVFGGQRSKTYLNDFFSYDVDSDHVDIISDGTKKDSGMVPMTGFTQRATIDPELNEIHVLSGLSKDKEKREENVRNSFWIYDIVRNSWSCVYKNDQAAKDNPTKSLQEEEPCPRFAHQLVYDELHKVHYLFGGNPGKSCSPKMRLDDFWSLKLCRPSKDYLLRHCKYLIRKHRFEEKAQVDPLSALKYLQNDLYITVDHSDPEETKEFQLLASALFKSGSDFTALGFSDVDHTYAQRTQLFDTLVNFFPDSMTPPKGNLVDLITL</sequence>
<feature type="initiator methionine" description="Removed" evidence="11 12">
    <location>
        <position position="1"/>
    </location>
</feature>
<feature type="chain" id="PRO_0000119138" description="Muskelin">
    <location>
        <begin position="2"/>
        <end position="735"/>
    </location>
</feature>
<feature type="domain" description="LisH" evidence="4">
    <location>
        <begin position="172"/>
        <end position="204"/>
    </location>
</feature>
<feature type="domain" description="CTLH" evidence="3">
    <location>
        <begin position="206"/>
        <end position="258"/>
    </location>
</feature>
<feature type="repeat" description="Kelch 1">
    <location>
        <begin position="284"/>
        <end position="330"/>
    </location>
</feature>
<feature type="repeat" description="Kelch 2">
    <location>
        <begin position="339"/>
        <end position="391"/>
    </location>
</feature>
<feature type="repeat" description="Kelch 3">
    <location>
        <begin position="408"/>
        <end position="458"/>
    </location>
</feature>
<feature type="repeat" description="Kelch 4">
    <location>
        <begin position="469"/>
        <end position="515"/>
    </location>
</feature>
<feature type="repeat" description="Kelch 5">
    <location>
        <begin position="526"/>
        <end position="578"/>
    </location>
</feature>
<feature type="repeat" description="Kelch 6">
    <location>
        <begin position="597"/>
        <end position="651"/>
    </location>
</feature>
<feature type="modified residue" description="N-acetylalanine" evidence="11 12">
    <location>
        <position position="2"/>
    </location>
</feature>
<feature type="splice variant" id="VSP_021852" description="In isoform 2." evidence="9">
    <location>
        <begin position="1"/>
        <end position="207"/>
    </location>
</feature>
<feature type="sequence variant" id="VAR_050057" description="In dbSNP:rs323844.">
    <original>C</original>
    <variation>G</variation>
    <location>
        <position position="469"/>
    </location>
</feature>
<feature type="sequence conflict" description="In Ref. 1; AAF06698." evidence="10" ref="1">
    <original>A</original>
    <variation>M</variation>
    <location>
        <position position="6"/>
    </location>
</feature>
<feature type="sequence conflict" description="In Ref. 1; AAF06698." evidence="10" ref="1">
    <original>N</original>
    <variation>Y</variation>
    <location>
        <position position="111"/>
    </location>
</feature>
<feature type="sequence conflict" description="In Ref. 1; AAF06698." evidence="10" ref="1">
    <original>I</original>
    <variation>N</variation>
    <location>
        <position position="408"/>
    </location>
</feature>
<feature type="sequence conflict" description="In Ref. 1; AAF06698." evidence="10" ref="1">
    <original>S</original>
    <variation>G</variation>
    <location>
        <position position="414"/>
    </location>
</feature>
<feature type="sequence conflict" description="In Ref. 1; AAF06698." evidence="10" ref="1">
    <original>Q</original>
    <variation>K</variation>
    <location>
        <position position="436"/>
    </location>
</feature>
<feature type="sequence conflict" description="In Ref. 1; AAF06698." evidence="10" ref="1">
    <original>G</original>
    <variation>A</variation>
    <location>
        <position position="474"/>
    </location>
</feature>
<feature type="sequence conflict" description="In Ref. 1; AAF06698." evidence="10" ref="1">
    <original>T</original>
    <variation>N</variation>
    <location>
        <position position="502"/>
    </location>
</feature>
<gene>
    <name type="primary">MKLN1</name>
</gene>
<name>MKLN1_HUMAN</name>
<keyword id="KW-0002">3D-structure</keyword>
<keyword id="KW-0007">Acetylation</keyword>
<keyword id="KW-0025">Alternative splicing</keyword>
<keyword id="KW-0966">Cell projection</keyword>
<keyword id="KW-0963">Cytoplasm</keyword>
<keyword id="KW-0880">Kelch repeat</keyword>
<keyword id="KW-0539">Nucleus</keyword>
<keyword id="KW-1267">Proteomics identification</keyword>
<keyword id="KW-1185">Reference proteome</keyword>
<keyword id="KW-0677">Repeat</keyword>
<keyword id="KW-0770">Synapse</keyword>